<protein>
    <recommendedName>
        <fullName evidence="7">Securin-like protein</fullName>
    </recommendedName>
    <alternativeName>
        <fullName evidence="9">Interactor of Fizzy protein</fullName>
    </alternativeName>
</protein>
<sequence>MEDLNFEERGSTQIPASLQQHFSAKLGRQNELEKTPSRGGLGLVVNSSKTPGGKSLQSLASACKVPPSTKKNTIPIAFECYEDETDDQIADVATIKKTEKHPCSPIDTANRCETFDSLAADIEDDMLNLEDQDVVLSEDRPYGDVIDPAESEAEALAELGVEEWDSYPPIDPASRIGDDFNYVLRTEDFAEEGDVKLEETRHRTVIADIDEVKMSKAERNELFSMLADDLDSYDLLAEEANLPL</sequence>
<organism evidence="8">
    <name type="scientific">Caenorhabditis elegans</name>
    <dbReference type="NCBI Taxonomy" id="6239"/>
    <lineage>
        <taxon>Eukaryota</taxon>
        <taxon>Metazoa</taxon>
        <taxon>Ecdysozoa</taxon>
        <taxon>Nematoda</taxon>
        <taxon>Chromadorea</taxon>
        <taxon>Rhabditida</taxon>
        <taxon>Rhabditina</taxon>
        <taxon>Rhabditomorpha</taxon>
        <taxon>Rhabditoidea</taxon>
        <taxon>Rhabditidae</taxon>
        <taxon>Peloderinae</taxon>
        <taxon>Caenorhabditis</taxon>
    </lineage>
</organism>
<dbReference type="EMBL" id="BX284602">
    <property type="protein sequence ID" value="CCD63069.1"/>
    <property type="molecule type" value="Genomic_DNA"/>
</dbReference>
<dbReference type="PIR" id="T15647">
    <property type="entry name" value="T15647"/>
</dbReference>
<dbReference type="RefSeq" id="NP_494931.1">
    <property type="nucleotide sequence ID" value="NM_062530.11"/>
</dbReference>
<dbReference type="PDB" id="5MZ6">
    <property type="method" value="EM"/>
    <property type="resolution" value="3.80 A"/>
    <property type="chains" value="B=1-244"/>
</dbReference>
<dbReference type="PDBsum" id="5MZ6"/>
<dbReference type="EMDB" id="EMD-3384"/>
<dbReference type="EMDB" id="EMD-3583"/>
<dbReference type="SMR" id="Q18235"/>
<dbReference type="ComplexPortal" id="CPX-1411">
    <property type="entry name" value="Separase-Securin complex"/>
</dbReference>
<dbReference type="DIP" id="DIP-25865N"/>
<dbReference type="FunCoup" id="Q18235">
    <property type="interactions" value="1397"/>
</dbReference>
<dbReference type="IntAct" id="Q18235">
    <property type="interactions" value="3"/>
</dbReference>
<dbReference type="STRING" id="6239.C27A2.3.2"/>
<dbReference type="PaxDb" id="6239-C27A2.3.1"/>
<dbReference type="PeptideAtlas" id="Q18235"/>
<dbReference type="EnsemblMetazoa" id="C27A2.3.1">
    <property type="protein sequence ID" value="C27A2.3.1"/>
    <property type="gene ID" value="WBGene00002068"/>
</dbReference>
<dbReference type="GeneID" id="173872"/>
<dbReference type="KEGG" id="cel:CELE_C27A2.3"/>
<dbReference type="UCSC" id="C27A2.3.1">
    <property type="organism name" value="c. elegans"/>
</dbReference>
<dbReference type="AGR" id="WB:WBGene00002068"/>
<dbReference type="CTD" id="173872"/>
<dbReference type="WormBase" id="C27A2.3">
    <property type="protein sequence ID" value="CE04103"/>
    <property type="gene ID" value="WBGene00002068"/>
    <property type="gene designation" value="ify-1"/>
</dbReference>
<dbReference type="eggNOG" id="ENOG502THY1">
    <property type="taxonomic scope" value="Eukaryota"/>
</dbReference>
<dbReference type="HOGENOM" id="CLU_099569_0_0_1"/>
<dbReference type="InParanoid" id="Q18235"/>
<dbReference type="OMA" id="HEEANNM"/>
<dbReference type="OrthoDB" id="5793797at2759"/>
<dbReference type="SignaLink" id="Q18235"/>
<dbReference type="PRO" id="PR:Q18235"/>
<dbReference type="Proteomes" id="UP000001940">
    <property type="component" value="Chromosome II"/>
</dbReference>
<dbReference type="Bgee" id="WBGene00002068">
    <property type="expression patterns" value="Expressed in adult organism and 4 other cell types or tissues"/>
</dbReference>
<dbReference type="GO" id="GO:0000793">
    <property type="term" value="C:condensed chromosome"/>
    <property type="evidence" value="ECO:0000314"/>
    <property type="project" value="WormBase"/>
</dbReference>
<dbReference type="GO" id="GO:0005737">
    <property type="term" value="C:cytoplasm"/>
    <property type="evidence" value="ECO:0000314"/>
    <property type="project" value="WormBase"/>
</dbReference>
<dbReference type="GO" id="GO:1990520">
    <property type="term" value="C:separase-securin complex"/>
    <property type="evidence" value="ECO:0000314"/>
    <property type="project" value="ComplexPortal"/>
</dbReference>
<dbReference type="GO" id="GO:0005876">
    <property type="term" value="C:spindle microtubule"/>
    <property type="evidence" value="ECO:0000314"/>
    <property type="project" value="WormBase"/>
</dbReference>
<dbReference type="GO" id="GO:0002020">
    <property type="term" value="F:protease binding"/>
    <property type="evidence" value="ECO:0000353"/>
    <property type="project" value="UniProtKB"/>
</dbReference>
<dbReference type="GO" id="GO:0031625">
    <property type="term" value="F:ubiquitin protein ligase binding"/>
    <property type="evidence" value="ECO:0000353"/>
    <property type="project" value="UniProtKB"/>
</dbReference>
<dbReference type="GO" id="GO:0051298">
    <property type="term" value="P:centrosome duplication"/>
    <property type="evidence" value="ECO:0000315"/>
    <property type="project" value="UniProtKB"/>
</dbReference>
<dbReference type="GO" id="GO:0051642">
    <property type="term" value="P:centrosome localization"/>
    <property type="evidence" value="ECO:0000315"/>
    <property type="project" value="UniProtKB"/>
</dbReference>
<dbReference type="GO" id="GO:0060471">
    <property type="term" value="P:cortical granule exocytosis"/>
    <property type="evidence" value="ECO:0000315"/>
    <property type="project" value="UniProtKB"/>
</dbReference>
<dbReference type="GO" id="GO:0034090">
    <property type="term" value="P:maintenance of meiotic sister chromatid cohesion"/>
    <property type="evidence" value="ECO:0000315"/>
    <property type="project" value="ComplexPortal"/>
</dbReference>
<dbReference type="GO" id="GO:0034088">
    <property type="term" value="P:maintenance of mitotic sister chromatid cohesion"/>
    <property type="evidence" value="ECO:0000315"/>
    <property type="project" value="ComplexPortal"/>
</dbReference>
<dbReference type="GO" id="GO:0051307">
    <property type="term" value="P:meiotic chromosome separation"/>
    <property type="evidence" value="ECO:0000315"/>
    <property type="project" value="UniProtKB"/>
</dbReference>
<dbReference type="GO" id="GO:0000281">
    <property type="term" value="P:mitotic cytokinesis"/>
    <property type="evidence" value="ECO:0000315"/>
    <property type="project" value="UniProtKB"/>
</dbReference>
<dbReference type="GO" id="GO:0051306">
    <property type="term" value="P:mitotic sister chromatid separation"/>
    <property type="evidence" value="ECO:0000315"/>
    <property type="project" value="UniProtKB"/>
</dbReference>
<dbReference type="GO" id="GO:0040038">
    <property type="term" value="P:polar body extrusion after meiotic divisions"/>
    <property type="evidence" value="ECO:0000315"/>
    <property type="project" value="UniProtKB"/>
</dbReference>
<dbReference type="GO" id="GO:0050821">
    <property type="term" value="P:protein stabilization"/>
    <property type="evidence" value="ECO:0000314"/>
    <property type="project" value="UniProtKB"/>
</dbReference>
<dbReference type="DisProt" id="DP03049"/>
<feature type="chain" id="PRO_0000440176" description="Securin-like protein" evidence="7">
    <location>
        <begin position="1"/>
        <end position="244"/>
    </location>
</feature>
<feature type="region of interest" description="Disordered" evidence="1">
    <location>
        <begin position="31"/>
        <end position="53"/>
    </location>
</feature>
<keyword id="KW-0002">3D-structure</keyword>
<keyword id="KW-0131">Cell cycle</keyword>
<keyword id="KW-0132">Cell division</keyword>
<keyword id="KW-0158">Chromosome</keyword>
<keyword id="KW-0963">Cytoplasm</keyword>
<keyword id="KW-0206">Cytoskeleton</keyword>
<keyword id="KW-0469">Meiosis</keyword>
<keyword id="KW-0498">Mitosis</keyword>
<keyword id="KW-1185">Reference proteome</keyword>
<keyword id="KW-0832">Ubl conjugation</keyword>
<gene>
    <name evidence="9" type="primary">ify-1</name>
    <name evidence="9" type="ORF">C27A2.3</name>
</gene>
<reference evidence="8" key="1">
    <citation type="journal article" date="1998" name="Science">
        <title>Genome sequence of the nematode C. elegans: a platform for investigating biology.</title>
        <authorList>
            <consortium name="The C. elegans sequencing consortium"/>
        </authorList>
    </citation>
    <scope>NUCLEOTIDE SEQUENCE [LARGE SCALE GENOMIC DNA]</scope>
    <source>
        <strain evidence="8">Bristol N2</strain>
    </source>
</reference>
<reference evidence="7" key="2">
    <citation type="journal article" date="2002" name="Curr. Biol.">
        <title>The Cdc20 homolog, FZY-1, and its interacting protein, IFY-1, are required for proper chromosome segregation in Caenorhabditis elegans.</title>
        <authorList>
            <person name="Kitagawa R."/>
            <person name="Law E."/>
            <person name="Tang L."/>
            <person name="Rose A.M."/>
        </authorList>
    </citation>
    <scope>FUNCTION</scope>
    <scope>INTERACTION WITH SEP-1</scope>
    <scope>DISRUPTION PHENOTYPE</scope>
</reference>
<reference evidence="7" key="3">
    <citation type="journal article" date="2007" name="Development">
        <title>Cortical granule exocytosis in C. elegans is regulated by cell cycle components including separase.</title>
        <authorList>
            <person name="Bembenek J.N."/>
            <person name="Richie C.T."/>
            <person name="Squirrell J.M."/>
            <person name="Campbell J.M."/>
            <person name="Eliceiri K.W."/>
            <person name="Poteryaev D."/>
            <person name="Spang A."/>
            <person name="Golden A."/>
            <person name="White J.G."/>
        </authorList>
    </citation>
    <scope>FUNCTION</scope>
    <scope>DISRUPTION PHENOTYPE</scope>
</reference>
<reference evidence="7" key="4">
    <citation type="journal article" date="2013" name="Development">
        <title>HECT-E3 ligase ETC-1 regulates securin and cyclin B1 cytoplasmic abundance to promote timely anaphase during meiosis in C. elegans.</title>
        <authorList>
            <person name="Wang R."/>
            <person name="Kaul Z."/>
            <person name="Ambardekar C."/>
            <person name="Yamamoto T.G."/>
            <person name="Kavdia K."/>
            <person name="Kodali K."/>
            <person name="High A.A."/>
            <person name="Kitagawa R."/>
        </authorList>
    </citation>
    <scope>FUNCTION</scope>
    <scope>INTERACTION WITH SEP-1 AND ETC-1</scope>
    <scope>SUBCELLULAR LOCATION</scope>
    <scope>TISSUE SPECIFICITY</scope>
    <scope>UBIQUITINATION</scope>
    <scope>DISRUPTION PHENOTYPE</scope>
</reference>
<reference evidence="7" key="5">
    <citation type="journal article" date="2016" name="Open Biol.">
        <title>A closed conformation of the Caenorhabditis elegans separase-securin complex.</title>
        <authorList>
            <person name="Bachmann G."/>
            <person name="Richards M.W."/>
            <person name="Winter A."/>
            <person name="Beuron F."/>
            <person name="Morris E."/>
            <person name="Bayliss R."/>
        </authorList>
    </citation>
    <scope>STRUCTURE BY ELECTRON MICROSCOPY (24 ANGSTROMS) IN COMPLEX WITH SEP-1</scope>
</reference>
<reference evidence="7" key="6">
    <citation type="journal article" date="2017" name="Nat. Struct. Mol. Biol.">
        <title>Cryo-EM structure of a metazoan separase-securin complex at near-atomic resolution.</title>
        <authorList>
            <person name="Boland A."/>
            <person name="Martin T.G."/>
            <person name="Zhang Z."/>
            <person name="Yang J."/>
            <person name="Bai X.C."/>
            <person name="Chang L."/>
            <person name="Scheres S.H."/>
            <person name="Barford D."/>
        </authorList>
    </citation>
    <scope>X-RAY CRYSTALLOGRAPHY (3.8 ANGSTROMS) IN COMPLEX WITH SEP-1</scope>
</reference>
<comment type="function">
    <text evidence="2 3 4">Acts as a chaperone and as an inhibitor for separase sep-1 (PubMed:27249343, PubMed:28263324). Plays an essential role in maintaining chromosome cohesion prior to meiotic and mitotic anaphase, in cytokinesis and in organizing the spindle and the centrosome (PubMed:12498686). Ubiquitination-dependent degradation at the onset of anaphase is likely to activate sep-1 resulting in the proteolysis of the cohesin complex and the subsequent segregation of the chromosomes (PubMed:12498686, PubMed:23578927). Also required for cortical granule exocytosis (PubMed:17913784).</text>
</comment>
<comment type="subunit">
    <text evidence="2 4 5 6">Forms a complex (via C-terminus) with separase sep-1 (PubMed:12498686, PubMed:23578927, PubMed:27249343, PubMed:28263324). Interaction with ify-1 stabilizes sep-1 (PubMed:27249343, PubMed:28263324). Also maintains the complex in the cytoplasm during interphase and recruits it to chromosomes during the first meiotic division (PubMed:23578927). Interacts with E3 ubiquitin-protein ligase etc-1 (PubMed:23578927).</text>
</comment>
<comment type="interaction">
    <interactant intactId="EBI-331643">
        <id>Q18235</id>
    </interactant>
    <interactant intactId="EBI-326265">
        <id>G5ED39</id>
        <label>sep-1</label>
    </interactant>
    <organismsDiffer>false</organismsDiffer>
    <experiments>4</experiments>
</comment>
<comment type="subcellular location">
    <subcellularLocation>
        <location evidence="4">Cytoplasm</location>
    </subcellularLocation>
    <subcellularLocation>
        <location evidence="4">Chromosome</location>
    </subcellularLocation>
    <subcellularLocation>
        <location evidence="4">Cytoplasm</location>
        <location evidence="4">Cytoskeleton</location>
        <location evidence="4">Spindle</location>
    </subcellularLocation>
    <text evidence="4">Localizes to cytoplasm in germ cells. After oocyte nuclear envelope breakdown, localizes to chromosomes and spindle microtubules until meiotic anaphase I where the chromosome localization disappears. Maintained at low levels in the cytoplasm during meiosis II and in subsequent mitotic divisions during early embryogenesis. Localizes to chromosomes during mitotic metaphase at the 4E embryonic stage.</text>
</comment>
<comment type="tissue specificity">
    <text evidence="4">Expressed in germ cells including oocytes.</text>
</comment>
<comment type="PTM">
    <text evidence="4">Ubiquitinated by etc-1 likely at the onset of anaphase, resulting in its degradation.</text>
</comment>
<comment type="disruption phenotype">
    <text evidence="2 3 4">RNAi-mediated knockdown causes embryonic lethality (PubMed:12498686). Embryos are arrested at the one-cell stage (PubMed:12498686). During the first mitotic division, embryos have defects in mitotic spindle formation, and centrosome duplication and positioning (PubMed:12498686). Chromosomes are decondensed, disorganized and accumulate due to a lack of cytokinesis (PubMed:12498686). RNAi-mediated knockdown at the larval stage causes in F1 embryos a loss of chromosome separation during meiosis I and no formation of polar bodies (PubMed:12498686). During meiosis, impaired cortical granule exocytosis (PubMed:17913784). Immediately after fertilization causes a reduction in cyclin cyb-1 protein levels (PubMed:23578927).</text>
</comment>
<accession>Q18235</accession>
<proteinExistence type="evidence at protein level"/>
<name>IFY1_CAEEL</name>
<evidence type="ECO:0000256" key="1">
    <source>
        <dbReference type="SAM" id="MobiDB-lite"/>
    </source>
</evidence>
<evidence type="ECO:0000269" key="2">
    <source>
    </source>
</evidence>
<evidence type="ECO:0000269" key="3">
    <source>
    </source>
</evidence>
<evidence type="ECO:0000269" key="4">
    <source>
    </source>
</evidence>
<evidence type="ECO:0000269" key="5">
    <source>
    </source>
</evidence>
<evidence type="ECO:0000269" key="6">
    <source>
    </source>
</evidence>
<evidence type="ECO:0000305" key="7"/>
<evidence type="ECO:0000312" key="8">
    <source>
        <dbReference type="Proteomes" id="UP000001940"/>
    </source>
</evidence>
<evidence type="ECO:0000312" key="9">
    <source>
        <dbReference type="WormBase" id="C27A2.3"/>
    </source>
</evidence>